<accession>A7HUR5</accession>
<proteinExistence type="inferred from homology"/>
<gene>
    <name type="ordered locus">Plav_2034</name>
</gene>
<comment type="similarity">
    <text evidence="1">Belongs to the UPF0335 family.</text>
</comment>
<name>Y2034_PARL1</name>
<protein>
    <recommendedName>
        <fullName evidence="1">UPF0335 protein Plav_2034</fullName>
    </recommendedName>
</protein>
<organism>
    <name type="scientific">Parvibaculum lavamentivorans (strain DS-1 / DSM 13023 / NCIMB 13966)</name>
    <dbReference type="NCBI Taxonomy" id="402881"/>
    <lineage>
        <taxon>Bacteria</taxon>
        <taxon>Pseudomonadati</taxon>
        <taxon>Pseudomonadota</taxon>
        <taxon>Alphaproteobacteria</taxon>
        <taxon>Hyphomicrobiales</taxon>
        <taxon>Parvibaculaceae</taxon>
        <taxon>Parvibaculum</taxon>
    </lineage>
</organism>
<feature type="chain" id="PRO_1000072843" description="UPF0335 protein Plav_2034">
    <location>
        <begin position="1"/>
        <end position="85"/>
    </location>
</feature>
<sequence length="85" mass="9556">MADGNTPNTGVAHDQLRSIVERIERLEEEKAALANDIKEVYAEAKGNGFDTKTLRQVVRIRKQDKAERQEQEAILELYLSALGMA</sequence>
<keyword id="KW-1185">Reference proteome</keyword>
<dbReference type="EMBL" id="CP000774">
    <property type="protein sequence ID" value="ABS63648.1"/>
    <property type="molecule type" value="Genomic_DNA"/>
</dbReference>
<dbReference type="RefSeq" id="WP_012110952.1">
    <property type="nucleotide sequence ID" value="NC_009719.1"/>
</dbReference>
<dbReference type="SMR" id="A7HUR5"/>
<dbReference type="STRING" id="402881.Plav_2034"/>
<dbReference type="KEGG" id="pla:Plav_2034"/>
<dbReference type="eggNOG" id="COG3750">
    <property type="taxonomic scope" value="Bacteria"/>
</dbReference>
<dbReference type="HOGENOM" id="CLU_158651_3_0_5"/>
<dbReference type="OrthoDB" id="9813793at2"/>
<dbReference type="Proteomes" id="UP000006377">
    <property type="component" value="Chromosome"/>
</dbReference>
<dbReference type="GO" id="GO:0003677">
    <property type="term" value="F:DNA binding"/>
    <property type="evidence" value="ECO:0007669"/>
    <property type="project" value="InterPro"/>
</dbReference>
<dbReference type="HAMAP" id="MF_00797">
    <property type="entry name" value="UPF0335"/>
    <property type="match status" value="1"/>
</dbReference>
<dbReference type="InterPro" id="IPR018753">
    <property type="entry name" value="GapR-like"/>
</dbReference>
<dbReference type="InterPro" id="IPR046367">
    <property type="entry name" value="GapR-like_DNA-bd"/>
</dbReference>
<dbReference type="NCBIfam" id="NF010247">
    <property type="entry name" value="PRK13694.1"/>
    <property type="match status" value="1"/>
</dbReference>
<dbReference type="Pfam" id="PF10073">
    <property type="entry name" value="GapR_DNA-bd"/>
    <property type="match status" value="1"/>
</dbReference>
<evidence type="ECO:0000255" key="1">
    <source>
        <dbReference type="HAMAP-Rule" id="MF_00797"/>
    </source>
</evidence>
<reference key="1">
    <citation type="journal article" date="2011" name="Stand. Genomic Sci.">
        <title>Complete genome sequence of Parvibaculum lavamentivorans type strain (DS-1(T)).</title>
        <authorList>
            <person name="Schleheck D."/>
            <person name="Weiss M."/>
            <person name="Pitluck S."/>
            <person name="Bruce D."/>
            <person name="Land M.L."/>
            <person name="Han S."/>
            <person name="Saunders E."/>
            <person name="Tapia R."/>
            <person name="Detter C."/>
            <person name="Brettin T."/>
            <person name="Han J."/>
            <person name="Woyke T."/>
            <person name="Goodwin L."/>
            <person name="Pennacchio L."/>
            <person name="Nolan M."/>
            <person name="Cook A.M."/>
            <person name="Kjelleberg S."/>
            <person name="Thomas T."/>
        </authorList>
    </citation>
    <scope>NUCLEOTIDE SEQUENCE [LARGE SCALE GENOMIC DNA]</scope>
    <source>
        <strain>DS-1 / DSM 13023 / NCIMB 13966</strain>
    </source>
</reference>